<name>CH10_BRUSI</name>
<evidence type="ECO:0000255" key="1">
    <source>
        <dbReference type="HAMAP-Rule" id="MF_00580"/>
    </source>
</evidence>
<organism>
    <name type="scientific">Brucella suis (strain ATCC 23445 / NCTC 10510)</name>
    <dbReference type="NCBI Taxonomy" id="470137"/>
    <lineage>
        <taxon>Bacteria</taxon>
        <taxon>Pseudomonadati</taxon>
        <taxon>Pseudomonadota</taxon>
        <taxon>Alphaproteobacteria</taxon>
        <taxon>Hyphomicrobiales</taxon>
        <taxon>Brucellaceae</taxon>
        <taxon>Brucella/Ochrobactrum group</taxon>
        <taxon>Brucella</taxon>
    </lineage>
</organism>
<reference key="1">
    <citation type="submission" date="2007-12" db="EMBL/GenBank/DDBJ databases">
        <title>Brucella suis ATCC 23445 whole genome shotgun sequencing project.</title>
        <authorList>
            <person name="Setubal J.C."/>
            <person name="Bowns C."/>
            <person name="Boyle S."/>
            <person name="Crasta O.R."/>
            <person name="Czar M.J."/>
            <person name="Dharmanolla C."/>
            <person name="Gillespie J.J."/>
            <person name="Kenyon R.W."/>
            <person name="Lu J."/>
            <person name="Mane S."/>
            <person name="Mohapatra S."/>
            <person name="Nagrani S."/>
            <person name="Purkayastha A."/>
            <person name="Rajasimha H.K."/>
            <person name="Shallom J.M."/>
            <person name="Shallom S."/>
            <person name="Shukla M."/>
            <person name="Snyder E.E."/>
            <person name="Sobral B.W."/>
            <person name="Wattam A.R."/>
            <person name="Will R."/>
            <person name="Williams K."/>
            <person name="Yoo H."/>
            <person name="Bruce D."/>
            <person name="Detter C."/>
            <person name="Munk C."/>
            <person name="Brettin T.S."/>
        </authorList>
    </citation>
    <scope>NUCLEOTIDE SEQUENCE [LARGE SCALE GENOMIC DNA]</scope>
    <source>
        <strain>ATCC 23445 / NCTC 10510</strain>
    </source>
</reference>
<proteinExistence type="inferred from homology"/>
<accession>A9WXQ1</accession>
<gene>
    <name evidence="1" type="primary">groES</name>
    <name evidence="1" type="synonym">groS</name>
    <name type="ordered locus">BSUIS_B0199</name>
</gene>
<feature type="chain" id="PRO_1000082367" description="Co-chaperonin GroES">
    <location>
        <begin position="1"/>
        <end position="98"/>
    </location>
</feature>
<dbReference type="EMBL" id="CP000912">
    <property type="protein sequence ID" value="ABY39217.1"/>
    <property type="molecule type" value="Genomic_DNA"/>
</dbReference>
<dbReference type="RefSeq" id="WP_002966386.1">
    <property type="nucleotide sequence ID" value="NC_010167.1"/>
</dbReference>
<dbReference type="SMR" id="A9WXQ1"/>
<dbReference type="GeneID" id="97535613"/>
<dbReference type="KEGG" id="bmt:BSUIS_B0199"/>
<dbReference type="HOGENOM" id="CLU_132825_1_0_5"/>
<dbReference type="Proteomes" id="UP000008545">
    <property type="component" value="Chromosome II"/>
</dbReference>
<dbReference type="GO" id="GO:0005737">
    <property type="term" value="C:cytoplasm"/>
    <property type="evidence" value="ECO:0007669"/>
    <property type="project" value="UniProtKB-SubCell"/>
</dbReference>
<dbReference type="GO" id="GO:0005524">
    <property type="term" value="F:ATP binding"/>
    <property type="evidence" value="ECO:0007669"/>
    <property type="project" value="InterPro"/>
</dbReference>
<dbReference type="GO" id="GO:0046872">
    <property type="term" value="F:metal ion binding"/>
    <property type="evidence" value="ECO:0007669"/>
    <property type="project" value="TreeGrafter"/>
</dbReference>
<dbReference type="GO" id="GO:0044183">
    <property type="term" value="F:protein folding chaperone"/>
    <property type="evidence" value="ECO:0007669"/>
    <property type="project" value="InterPro"/>
</dbReference>
<dbReference type="GO" id="GO:0051087">
    <property type="term" value="F:protein-folding chaperone binding"/>
    <property type="evidence" value="ECO:0007669"/>
    <property type="project" value="TreeGrafter"/>
</dbReference>
<dbReference type="GO" id="GO:0051082">
    <property type="term" value="F:unfolded protein binding"/>
    <property type="evidence" value="ECO:0007669"/>
    <property type="project" value="TreeGrafter"/>
</dbReference>
<dbReference type="GO" id="GO:0051085">
    <property type="term" value="P:chaperone cofactor-dependent protein refolding"/>
    <property type="evidence" value="ECO:0007669"/>
    <property type="project" value="TreeGrafter"/>
</dbReference>
<dbReference type="CDD" id="cd00320">
    <property type="entry name" value="cpn10"/>
    <property type="match status" value="1"/>
</dbReference>
<dbReference type="FunFam" id="2.30.33.40:FF:000001">
    <property type="entry name" value="10 kDa chaperonin"/>
    <property type="match status" value="1"/>
</dbReference>
<dbReference type="Gene3D" id="2.30.33.40">
    <property type="entry name" value="GroES chaperonin"/>
    <property type="match status" value="1"/>
</dbReference>
<dbReference type="HAMAP" id="MF_00580">
    <property type="entry name" value="CH10"/>
    <property type="match status" value="1"/>
</dbReference>
<dbReference type="InterPro" id="IPR020818">
    <property type="entry name" value="Chaperonin_GroES"/>
</dbReference>
<dbReference type="InterPro" id="IPR037124">
    <property type="entry name" value="Chaperonin_GroES_sf"/>
</dbReference>
<dbReference type="InterPro" id="IPR018369">
    <property type="entry name" value="Chaprnonin_Cpn10_CS"/>
</dbReference>
<dbReference type="InterPro" id="IPR011032">
    <property type="entry name" value="GroES-like_sf"/>
</dbReference>
<dbReference type="NCBIfam" id="NF001527">
    <property type="entry name" value="PRK00364.1-2"/>
    <property type="match status" value="1"/>
</dbReference>
<dbReference type="NCBIfam" id="NF001529">
    <property type="entry name" value="PRK00364.1-5"/>
    <property type="match status" value="1"/>
</dbReference>
<dbReference type="NCBIfam" id="NF001531">
    <property type="entry name" value="PRK00364.2-2"/>
    <property type="match status" value="1"/>
</dbReference>
<dbReference type="NCBIfam" id="NF001533">
    <property type="entry name" value="PRK00364.2-4"/>
    <property type="match status" value="1"/>
</dbReference>
<dbReference type="NCBIfam" id="NF001534">
    <property type="entry name" value="PRK00364.2-5"/>
    <property type="match status" value="1"/>
</dbReference>
<dbReference type="PANTHER" id="PTHR10772">
    <property type="entry name" value="10 KDA HEAT SHOCK PROTEIN"/>
    <property type="match status" value="1"/>
</dbReference>
<dbReference type="PANTHER" id="PTHR10772:SF58">
    <property type="entry name" value="CO-CHAPERONIN GROES"/>
    <property type="match status" value="1"/>
</dbReference>
<dbReference type="Pfam" id="PF00166">
    <property type="entry name" value="Cpn10"/>
    <property type="match status" value="1"/>
</dbReference>
<dbReference type="PRINTS" id="PR00297">
    <property type="entry name" value="CHAPERONIN10"/>
</dbReference>
<dbReference type="SMART" id="SM00883">
    <property type="entry name" value="Cpn10"/>
    <property type="match status" value="1"/>
</dbReference>
<dbReference type="SUPFAM" id="SSF50129">
    <property type="entry name" value="GroES-like"/>
    <property type="match status" value="1"/>
</dbReference>
<dbReference type="PROSITE" id="PS00681">
    <property type="entry name" value="CHAPERONINS_CPN10"/>
    <property type="match status" value="1"/>
</dbReference>
<comment type="function">
    <text evidence="1">Together with the chaperonin GroEL, plays an essential role in assisting protein folding. The GroEL-GroES system forms a nano-cage that allows encapsulation of the non-native substrate proteins and provides a physical environment optimized to promote and accelerate protein folding. GroES binds to the apical surface of the GroEL ring, thereby capping the opening of the GroEL channel.</text>
</comment>
<comment type="subunit">
    <text evidence="1">Heptamer of 7 subunits arranged in a ring. Interacts with the chaperonin GroEL.</text>
</comment>
<comment type="subcellular location">
    <subcellularLocation>
        <location evidence="1">Cytoplasm</location>
    </subcellularLocation>
</comment>
<comment type="similarity">
    <text evidence="1">Belongs to the GroES chaperonin family.</text>
</comment>
<protein>
    <recommendedName>
        <fullName evidence="1">Co-chaperonin GroES</fullName>
    </recommendedName>
    <alternativeName>
        <fullName evidence="1">10 kDa chaperonin</fullName>
    </alternativeName>
    <alternativeName>
        <fullName evidence="1">Chaperonin-10</fullName>
        <shortName evidence="1">Cpn10</shortName>
    </alternativeName>
</protein>
<keyword id="KW-0143">Chaperone</keyword>
<keyword id="KW-0963">Cytoplasm</keyword>
<sequence>MADIKFRPLHDRVVVRRVESEAKTAGGIIIPDTAKEKPQEGEVVAAGAGARDEAGKLVPLDVKAGDRVLFGKWSGTEVKIGGEDLLIMKESDILGIVG</sequence>